<protein>
    <recommendedName>
        <fullName evidence="1">Sec-independent protein translocase protein TatA</fullName>
    </recommendedName>
</protein>
<comment type="function">
    <text evidence="1">Part of the twin-arginine translocation (Tat) system that transports large folded proteins containing a characteristic twin-arginine motif in their signal peptide across membranes. TatA could form the protein-conducting channel of the Tat system.</text>
</comment>
<comment type="subunit">
    <text evidence="1">Forms a complex with TatC.</text>
</comment>
<comment type="subcellular location">
    <subcellularLocation>
        <location evidence="1">Cell inner membrane</location>
        <topology evidence="1">Single-pass membrane protein</topology>
    </subcellularLocation>
</comment>
<comment type="similarity">
    <text evidence="1">Belongs to the TatA/E family.</text>
</comment>
<accession>A8G311</accession>
<organism>
    <name type="scientific">Prochlorococcus marinus (strain MIT 9215)</name>
    <dbReference type="NCBI Taxonomy" id="93060"/>
    <lineage>
        <taxon>Bacteria</taxon>
        <taxon>Bacillati</taxon>
        <taxon>Cyanobacteriota</taxon>
        <taxon>Cyanophyceae</taxon>
        <taxon>Synechococcales</taxon>
        <taxon>Prochlorococcaceae</taxon>
        <taxon>Prochlorococcus</taxon>
    </lineage>
</organism>
<name>TATA_PROM2</name>
<dbReference type="EMBL" id="CP000825">
    <property type="protein sequence ID" value="ABV49992.1"/>
    <property type="molecule type" value="Genomic_DNA"/>
</dbReference>
<dbReference type="RefSeq" id="WP_002808122.1">
    <property type="nucleotide sequence ID" value="NC_009840.1"/>
</dbReference>
<dbReference type="STRING" id="93060.P9215_03761"/>
<dbReference type="KEGG" id="pmh:P9215_03761"/>
<dbReference type="eggNOG" id="COG1826">
    <property type="taxonomic scope" value="Bacteria"/>
</dbReference>
<dbReference type="HOGENOM" id="CLU_086034_1_5_3"/>
<dbReference type="OrthoDB" id="9800908at2"/>
<dbReference type="Proteomes" id="UP000002014">
    <property type="component" value="Chromosome"/>
</dbReference>
<dbReference type="GO" id="GO:0033281">
    <property type="term" value="C:TAT protein transport complex"/>
    <property type="evidence" value="ECO:0007669"/>
    <property type="project" value="UniProtKB-UniRule"/>
</dbReference>
<dbReference type="GO" id="GO:0008320">
    <property type="term" value="F:protein transmembrane transporter activity"/>
    <property type="evidence" value="ECO:0007669"/>
    <property type="project" value="UniProtKB-UniRule"/>
</dbReference>
<dbReference type="GO" id="GO:0043953">
    <property type="term" value="P:protein transport by the Tat complex"/>
    <property type="evidence" value="ECO:0007669"/>
    <property type="project" value="UniProtKB-UniRule"/>
</dbReference>
<dbReference type="Gene3D" id="1.20.5.3310">
    <property type="match status" value="1"/>
</dbReference>
<dbReference type="HAMAP" id="MF_00236">
    <property type="entry name" value="TatA_E"/>
    <property type="match status" value="1"/>
</dbReference>
<dbReference type="InterPro" id="IPR003369">
    <property type="entry name" value="TatA/B/E"/>
</dbReference>
<dbReference type="InterPro" id="IPR006312">
    <property type="entry name" value="TatA/E"/>
</dbReference>
<dbReference type="NCBIfam" id="NF011429">
    <property type="entry name" value="PRK14857.1"/>
    <property type="match status" value="1"/>
</dbReference>
<dbReference type="NCBIfam" id="NF011430">
    <property type="entry name" value="PRK14861.1"/>
    <property type="match status" value="1"/>
</dbReference>
<dbReference type="NCBIfam" id="TIGR01411">
    <property type="entry name" value="tatAE"/>
    <property type="match status" value="1"/>
</dbReference>
<dbReference type="PANTHER" id="PTHR33162">
    <property type="entry name" value="SEC-INDEPENDENT PROTEIN TRANSLOCASE PROTEIN TATA, CHLOROPLASTIC"/>
    <property type="match status" value="1"/>
</dbReference>
<dbReference type="PANTHER" id="PTHR33162:SF1">
    <property type="entry name" value="SEC-INDEPENDENT PROTEIN TRANSLOCASE PROTEIN TATA, CHLOROPLASTIC"/>
    <property type="match status" value="1"/>
</dbReference>
<dbReference type="Pfam" id="PF02416">
    <property type="entry name" value="TatA_B_E"/>
    <property type="match status" value="1"/>
</dbReference>
<dbReference type="PRINTS" id="PR01506">
    <property type="entry name" value="TATBPROTEIN"/>
</dbReference>
<gene>
    <name evidence="1" type="primary">tatA</name>
    <name type="ordered locus">P9215_03761</name>
</gene>
<sequence length="86" mass="9613">MNIFGVGLPEVTVILILALLIFGPKKLPELGKQLGKTLKSLKKASNEFQNEIDQVMNEEDESPKSIESNQTNEINQEKIDSENSKK</sequence>
<reference key="1">
    <citation type="journal article" date="2007" name="PLoS Genet.">
        <title>Patterns and implications of gene gain and loss in the evolution of Prochlorococcus.</title>
        <authorList>
            <person name="Kettler G.C."/>
            <person name="Martiny A.C."/>
            <person name="Huang K."/>
            <person name="Zucker J."/>
            <person name="Coleman M.L."/>
            <person name="Rodrigue S."/>
            <person name="Chen F."/>
            <person name="Lapidus A."/>
            <person name="Ferriera S."/>
            <person name="Johnson J."/>
            <person name="Steglich C."/>
            <person name="Church G.M."/>
            <person name="Richardson P."/>
            <person name="Chisholm S.W."/>
        </authorList>
    </citation>
    <scope>NUCLEOTIDE SEQUENCE [LARGE SCALE GENOMIC DNA]</scope>
    <source>
        <strain>MIT 9215</strain>
    </source>
</reference>
<keyword id="KW-0997">Cell inner membrane</keyword>
<keyword id="KW-1003">Cell membrane</keyword>
<keyword id="KW-0472">Membrane</keyword>
<keyword id="KW-0653">Protein transport</keyword>
<keyword id="KW-0811">Translocation</keyword>
<keyword id="KW-0812">Transmembrane</keyword>
<keyword id="KW-1133">Transmembrane helix</keyword>
<keyword id="KW-0813">Transport</keyword>
<evidence type="ECO:0000255" key="1">
    <source>
        <dbReference type="HAMAP-Rule" id="MF_00236"/>
    </source>
</evidence>
<evidence type="ECO:0000256" key="2">
    <source>
        <dbReference type="SAM" id="MobiDB-lite"/>
    </source>
</evidence>
<proteinExistence type="inferred from homology"/>
<feature type="chain" id="PRO_0000336636" description="Sec-independent protein translocase protein TatA">
    <location>
        <begin position="1"/>
        <end position="86"/>
    </location>
</feature>
<feature type="transmembrane region" description="Helical" evidence="1">
    <location>
        <begin position="3"/>
        <end position="23"/>
    </location>
</feature>
<feature type="region of interest" description="Disordered" evidence="2">
    <location>
        <begin position="56"/>
        <end position="86"/>
    </location>
</feature>
<feature type="compositionally biased region" description="Polar residues" evidence="2">
    <location>
        <begin position="65"/>
        <end position="74"/>
    </location>
</feature>
<feature type="compositionally biased region" description="Basic and acidic residues" evidence="2">
    <location>
        <begin position="75"/>
        <end position="86"/>
    </location>
</feature>